<evidence type="ECO:0000250" key="1"/>
<evidence type="ECO:0000250" key="2">
    <source>
        <dbReference type="UniProtKB" id="Q04264"/>
    </source>
</evidence>
<evidence type="ECO:0000255" key="3"/>
<evidence type="ECO:0000256" key="4">
    <source>
        <dbReference type="SAM" id="MobiDB-lite"/>
    </source>
</evidence>
<evidence type="ECO:0000305" key="5"/>
<protein>
    <recommendedName>
        <fullName>Sister chromatid cohesion protein PDS5 homolog</fullName>
    </recommendedName>
    <alternativeName>
        <fullName>Precocious dissociation of sisters protein 5 homolog</fullName>
    </alternativeName>
</protein>
<proteinExistence type="inferred from homology"/>
<feature type="chain" id="PRO_0000391850" description="Sister chromatid cohesion protein PDS5 homolog">
    <location>
        <begin position="1"/>
        <end position="1450"/>
    </location>
</feature>
<feature type="region of interest" description="Disordered" evidence="4">
    <location>
        <begin position="1"/>
        <end position="145"/>
    </location>
</feature>
<feature type="region of interest" description="Disordered" evidence="4">
    <location>
        <begin position="680"/>
        <end position="707"/>
    </location>
</feature>
<feature type="region of interest" description="Disordered" evidence="4">
    <location>
        <begin position="1340"/>
        <end position="1450"/>
    </location>
</feature>
<feature type="coiled-coil region" evidence="3">
    <location>
        <begin position="650"/>
        <end position="716"/>
    </location>
</feature>
<feature type="compositionally biased region" description="Acidic residues" evidence="4">
    <location>
        <begin position="45"/>
        <end position="59"/>
    </location>
</feature>
<feature type="compositionally biased region" description="Low complexity" evidence="4">
    <location>
        <begin position="77"/>
        <end position="138"/>
    </location>
</feature>
<feature type="compositionally biased region" description="Polar residues" evidence="4">
    <location>
        <begin position="682"/>
        <end position="691"/>
    </location>
</feature>
<feature type="compositionally biased region" description="Low complexity" evidence="4">
    <location>
        <begin position="692"/>
        <end position="707"/>
    </location>
</feature>
<feature type="compositionally biased region" description="Low complexity" evidence="4">
    <location>
        <begin position="1350"/>
        <end position="1363"/>
    </location>
</feature>
<feature type="compositionally biased region" description="Basic and acidic residues" evidence="4">
    <location>
        <begin position="1369"/>
        <end position="1378"/>
    </location>
</feature>
<feature type="compositionally biased region" description="Low complexity" evidence="4">
    <location>
        <begin position="1387"/>
        <end position="1401"/>
    </location>
</feature>
<feature type="compositionally biased region" description="Basic residues" evidence="4">
    <location>
        <begin position="1402"/>
        <end position="1427"/>
    </location>
</feature>
<feature type="compositionally biased region" description="Acidic residues" evidence="4">
    <location>
        <begin position="1430"/>
        <end position="1450"/>
    </location>
</feature>
<name>PDS5_DICDI</name>
<accession>Q552Q7</accession>
<comment type="function">
    <text evidence="1">May regulate sister chromatid cohesion during mitosis and couple it to DNA replication.</text>
</comment>
<comment type="subcellular location">
    <subcellularLocation>
        <location evidence="2">Nucleus</location>
    </subcellularLocation>
</comment>
<comment type="similarity">
    <text evidence="3">Belongs to the PDS5 family.</text>
</comment>
<organism>
    <name type="scientific">Dictyostelium discoideum</name>
    <name type="common">Social amoeba</name>
    <dbReference type="NCBI Taxonomy" id="44689"/>
    <lineage>
        <taxon>Eukaryota</taxon>
        <taxon>Amoebozoa</taxon>
        <taxon>Evosea</taxon>
        <taxon>Eumycetozoa</taxon>
        <taxon>Dictyostelia</taxon>
        <taxon>Dictyosteliales</taxon>
        <taxon>Dictyosteliaceae</taxon>
        <taxon>Dictyostelium</taxon>
    </lineage>
</organism>
<dbReference type="EMBL" id="AAFI02000013">
    <property type="protein sequence ID" value="EAL69715.1"/>
    <property type="molecule type" value="Genomic_DNA"/>
</dbReference>
<dbReference type="RefSeq" id="XP_643624.1">
    <property type="nucleotide sequence ID" value="XM_638532.1"/>
</dbReference>
<dbReference type="SMR" id="Q552Q7"/>
<dbReference type="FunCoup" id="Q552Q7">
    <property type="interactions" value="489"/>
</dbReference>
<dbReference type="STRING" id="44689.Q552Q7"/>
<dbReference type="PaxDb" id="44689-DDB0305112"/>
<dbReference type="EnsemblProtists" id="EAL69715">
    <property type="protein sequence ID" value="EAL69715"/>
    <property type="gene ID" value="DDB_G0275929"/>
</dbReference>
<dbReference type="GeneID" id="8620211"/>
<dbReference type="KEGG" id="ddi:DDB_G0275929"/>
<dbReference type="dictyBase" id="DDB_G0275929">
    <property type="gene designation" value="pds5"/>
</dbReference>
<dbReference type="VEuPathDB" id="AmoebaDB:DDB_G0275929"/>
<dbReference type="eggNOG" id="KOG1525">
    <property type="taxonomic scope" value="Eukaryota"/>
</dbReference>
<dbReference type="HOGENOM" id="CLU_251372_0_0_1"/>
<dbReference type="InParanoid" id="Q552Q7"/>
<dbReference type="OMA" id="YPPAYNM"/>
<dbReference type="PhylomeDB" id="Q552Q7"/>
<dbReference type="Reactome" id="R-DDI-2468052">
    <property type="pathway name" value="Establishment of Sister Chromatid Cohesion"/>
</dbReference>
<dbReference type="Reactome" id="R-DDI-2470946">
    <property type="pathway name" value="Cohesin Loading onto Chromatin"/>
</dbReference>
<dbReference type="Reactome" id="R-DDI-2500257">
    <property type="pathway name" value="Resolution of Sister Chromatid Cohesion"/>
</dbReference>
<dbReference type="PRO" id="PR:Q552Q7"/>
<dbReference type="Proteomes" id="UP000002195">
    <property type="component" value="Chromosome 2"/>
</dbReference>
<dbReference type="GO" id="GO:0000785">
    <property type="term" value="C:chromatin"/>
    <property type="evidence" value="ECO:0000318"/>
    <property type="project" value="GO_Central"/>
</dbReference>
<dbReference type="GO" id="GO:0005634">
    <property type="term" value="C:nucleus"/>
    <property type="evidence" value="ECO:0000318"/>
    <property type="project" value="GO_Central"/>
</dbReference>
<dbReference type="GO" id="GO:0051301">
    <property type="term" value="P:cell division"/>
    <property type="evidence" value="ECO:0007669"/>
    <property type="project" value="UniProtKB-KW"/>
</dbReference>
<dbReference type="GO" id="GO:0006281">
    <property type="term" value="P:DNA repair"/>
    <property type="evidence" value="ECO:0000318"/>
    <property type="project" value="GO_Central"/>
</dbReference>
<dbReference type="GO" id="GO:0007064">
    <property type="term" value="P:mitotic sister chromatid cohesion"/>
    <property type="evidence" value="ECO:0000318"/>
    <property type="project" value="GO_Central"/>
</dbReference>
<dbReference type="GO" id="GO:0008156">
    <property type="term" value="P:negative regulation of DNA replication"/>
    <property type="evidence" value="ECO:0000250"/>
    <property type="project" value="UniProtKB"/>
</dbReference>
<dbReference type="CDD" id="cd19953">
    <property type="entry name" value="PDS5"/>
    <property type="match status" value="1"/>
</dbReference>
<dbReference type="Gene3D" id="1.25.10.10">
    <property type="entry name" value="Leucine-rich Repeat Variant"/>
    <property type="match status" value="1"/>
</dbReference>
<dbReference type="InterPro" id="IPR011989">
    <property type="entry name" value="ARM-like"/>
</dbReference>
<dbReference type="InterPro" id="IPR016024">
    <property type="entry name" value="ARM-type_fold"/>
</dbReference>
<dbReference type="InterPro" id="IPR039776">
    <property type="entry name" value="Pds5"/>
</dbReference>
<dbReference type="PANTHER" id="PTHR12663">
    <property type="entry name" value="ANDROGEN INDUCED INHIBITOR OF PROLIFERATION AS3 / PDS5-RELATED"/>
    <property type="match status" value="1"/>
</dbReference>
<dbReference type="PANTHER" id="PTHR12663:SF0">
    <property type="entry name" value="PRECOCIOUS DISSOCIATION OF SISTERS 5, ISOFORM A"/>
    <property type="match status" value="1"/>
</dbReference>
<dbReference type="Pfam" id="PF20168">
    <property type="entry name" value="PDS5"/>
    <property type="match status" value="1"/>
</dbReference>
<dbReference type="SUPFAM" id="SSF48371">
    <property type="entry name" value="ARM repeat"/>
    <property type="match status" value="1"/>
</dbReference>
<sequence length="1450" mass="166571">MATRATRAASEVAKTKAATNLPSIRKRKSIENEEEESKHNTSINDDGELDSDIDEEDESKFEKEFTVKKRQKKSPAKTQQQPQKSITTPTKPTPTKTTSKPTKPSATTSPSQQKQSSQSSQNTSKKQATSSSSQQSTQQKKKETKIKYNLKPINIERLATYDQHMSGTLSNEKIIKRLKKLDEYLQDKKRGNTEGLEIVLEVLIDPKFADNKIFEIRLMTSCCLSEIFRIYAPTLPFDMVVLKVVFKLFTEQVLQGDKVDKKLFPQYFQMLERLSVIKVFALLALVDSSMLTPFFKDCLSRVHGDKEHQPMDIMFSTLLNTILESLEEVPTSLWNELLESLIEREKGGVPTSKAIFTHDLIETNSRFLQVHFDLFLQDLLEPEILAGGQQQQQQDSSLSNNGISKQLKKKKNEILFEMFNILPEFIYPALQNLEFDLEDVNASIRKGAAIVLSRCYSTESASDELIAQRPTLYTTFLNRFHDVDIKIRTVMMEFSEHFTTTSDLEMERVLKSVRDRFRDSEPDIRIKAIQIFQKYIIKNPELMNPELMSEYLERVRDKDSKVRKDAEISLSTVWRSVREKYGPIDDWSNTLIDCFSTIPNTLIHCLGLYDDDKYRIEIAFDSILLPQHSDVKNRSQVFLEIYKYLDESNKQLFKKYLEEKKSLRQEFLALIQFLKNPKVVGGSTTPTSKKSQPPQQQQQQQQQQQQQLQQPENDIEVYITHVDNLLPKFIGESSKKLVRQLITPSNKKILDLLVLISDINTTFQEQYNIKISIISKAQNESSFSEFIKYMVNKLAYSIVGKENIKYLLRGLRSDLGLDNFDKNNPIDLLEEFNEKIYEKEVKDGVPETLEVLLMLSQVYANIFDDYGDQLVGFLTCSKSIVYPVLQILSNSWKTLKLSKKTLKSTLDMLLRLTQVPQPTLARLAFKTFIKFATPALTSINSTNGKVDNNKLVVTLKDLANNLFDQLEDKSKNLLSILEVIGCLAKGYSLVLSEHLDTLDILLIKKIMTGVCTLDFNQKVQLNKSVEHHLNTSYSKDVLIKIAAIKCMSNYLLGLREITKKSHEMVNMLFEFYIGLDKNKTYNDLEKSHLKIHIAIGLLRVFQRSQYEKEITPQQFILICNSTSITTKQRGDPLIRRLIEKLAKVMILNRLPMKYMAAFGMAAQQPYSVLALVRKHSTSIIKTRRMVISRLAASLSMAKNLTEFYPESSMPYFLYVVSHREDFERDAPDYIESACYLNFFIDLLVEEADNYSIIHTIFTKLKRSTDALDKKSKNHIIAAELGLQILTHQYQQKKWKPQKHPIVIVLPEKFYIIHDDQDEMSIDDEVTSIKLPSLLPKRFKLPPLPSITDQNNNNNNNNTNSTNNDESEKDENNNNKNDNDNDNDNDDNSTTAVPQKSIISKPPAKKVSKKAAAKQKSPKKKTNKKKKQSSSEEEVSSSEEEDESQDEEVEN</sequence>
<gene>
    <name evidence="2" type="primary">pds5</name>
    <name type="ORF">DDB_G0275929</name>
</gene>
<reference key="1">
    <citation type="journal article" date="2002" name="Nature">
        <title>Sequence and analysis of chromosome 2 of Dictyostelium discoideum.</title>
        <authorList>
            <person name="Gloeckner G."/>
            <person name="Eichinger L."/>
            <person name="Szafranski K."/>
            <person name="Pachebat J.A."/>
            <person name="Bankier A.T."/>
            <person name="Dear P.H."/>
            <person name="Lehmann R."/>
            <person name="Baumgart C."/>
            <person name="Parra G."/>
            <person name="Abril J.F."/>
            <person name="Guigo R."/>
            <person name="Kumpf K."/>
            <person name="Tunggal B."/>
            <person name="Cox E.C."/>
            <person name="Quail M.A."/>
            <person name="Platzer M."/>
            <person name="Rosenthal A."/>
            <person name="Noegel A.A."/>
        </authorList>
    </citation>
    <scope>NUCLEOTIDE SEQUENCE [LARGE SCALE GENOMIC DNA]</scope>
    <source>
        <strain>AX4</strain>
    </source>
</reference>
<reference evidence="5" key="2">
    <citation type="journal article" date="2005" name="Nature">
        <title>The genome of the social amoeba Dictyostelium discoideum.</title>
        <authorList>
            <person name="Eichinger L."/>
            <person name="Pachebat J.A."/>
            <person name="Gloeckner G."/>
            <person name="Rajandream M.A."/>
            <person name="Sucgang R."/>
            <person name="Berriman M."/>
            <person name="Song J."/>
            <person name="Olsen R."/>
            <person name="Szafranski K."/>
            <person name="Xu Q."/>
            <person name="Tunggal B."/>
            <person name="Kummerfeld S."/>
            <person name="Madera M."/>
            <person name="Konfortov B.A."/>
            <person name="Rivero F."/>
            <person name="Bankier A.T."/>
            <person name="Lehmann R."/>
            <person name="Hamlin N."/>
            <person name="Davies R."/>
            <person name="Gaudet P."/>
            <person name="Fey P."/>
            <person name="Pilcher K."/>
            <person name="Chen G."/>
            <person name="Saunders D."/>
            <person name="Sodergren E.J."/>
            <person name="Davis P."/>
            <person name="Kerhornou A."/>
            <person name="Nie X."/>
            <person name="Hall N."/>
            <person name="Anjard C."/>
            <person name="Hemphill L."/>
            <person name="Bason N."/>
            <person name="Farbrother P."/>
            <person name="Desany B."/>
            <person name="Just E."/>
            <person name="Morio T."/>
            <person name="Rost R."/>
            <person name="Churcher C.M."/>
            <person name="Cooper J."/>
            <person name="Haydock S."/>
            <person name="van Driessche N."/>
            <person name="Cronin A."/>
            <person name="Goodhead I."/>
            <person name="Muzny D.M."/>
            <person name="Mourier T."/>
            <person name="Pain A."/>
            <person name="Lu M."/>
            <person name="Harper D."/>
            <person name="Lindsay R."/>
            <person name="Hauser H."/>
            <person name="James K.D."/>
            <person name="Quiles M."/>
            <person name="Madan Babu M."/>
            <person name="Saito T."/>
            <person name="Buchrieser C."/>
            <person name="Wardroper A."/>
            <person name="Felder M."/>
            <person name="Thangavelu M."/>
            <person name="Johnson D."/>
            <person name="Knights A."/>
            <person name="Loulseged H."/>
            <person name="Mungall K.L."/>
            <person name="Oliver K."/>
            <person name="Price C."/>
            <person name="Quail M.A."/>
            <person name="Urushihara H."/>
            <person name="Hernandez J."/>
            <person name="Rabbinowitsch E."/>
            <person name="Steffen D."/>
            <person name="Sanders M."/>
            <person name="Ma J."/>
            <person name="Kohara Y."/>
            <person name="Sharp S."/>
            <person name="Simmonds M.N."/>
            <person name="Spiegler S."/>
            <person name="Tivey A."/>
            <person name="Sugano S."/>
            <person name="White B."/>
            <person name="Walker D."/>
            <person name="Woodward J.R."/>
            <person name="Winckler T."/>
            <person name="Tanaka Y."/>
            <person name="Shaulsky G."/>
            <person name="Schleicher M."/>
            <person name="Weinstock G.M."/>
            <person name="Rosenthal A."/>
            <person name="Cox E.C."/>
            <person name="Chisholm R.L."/>
            <person name="Gibbs R.A."/>
            <person name="Loomis W.F."/>
            <person name="Platzer M."/>
            <person name="Kay R.R."/>
            <person name="Williams J.G."/>
            <person name="Dear P.H."/>
            <person name="Noegel A.A."/>
            <person name="Barrell B.G."/>
            <person name="Kuspa A."/>
        </authorList>
    </citation>
    <scope>NUCLEOTIDE SEQUENCE [LARGE SCALE GENOMIC DNA]</scope>
    <source>
        <strain>AX4</strain>
    </source>
</reference>
<keyword id="KW-0131">Cell cycle</keyword>
<keyword id="KW-0132">Cell division</keyword>
<keyword id="KW-0175">Coiled coil</keyword>
<keyword id="KW-0498">Mitosis</keyword>
<keyword id="KW-0539">Nucleus</keyword>
<keyword id="KW-1185">Reference proteome</keyword>